<reference key="1">
    <citation type="journal article" date="2009" name="PLoS Genet.">
        <title>Organised genome dynamics in the Escherichia coli species results in highly diverse adaptive paths.</title>
        <authorList>
            <person name="Touchon M."/>
            <person name="Hoede C."/>
            <person name="Tenaillon O."/>
            <person name="Barbe V."/>
            <person name="Baeriswyl S."/>
            <person name="Bidet P."/>
            <person name="Bingen E."/>
            <person name="Bonacorsi S."/>
            <person name="Bouchier C."/>
            <person name="Bouvet O."/>
            <person name="Calteau A."/>
            <person name="Chiapello H."/>
            <person name="Clermont O."/>
            <person name="Cruveiller S."/>
            <person name="Danchin A."/>
            <person name="Diard M."/>
            <person name="Dossat C."/>
            <person name="Karoui M.E."/>
            <person name="Frapy E."/>
            <person name="Garry L."/>
            <person name="Ghigo J.M."/>
            <person name="Gilles A.M."/>
            <person name="Johnson J."/>
            <person name="Le Bouguenec C."/>
            <person name="Lescat M."/>
            <person name="Mangenot S."/>
            <person name="Martinez-Jehanne V."/>
            <person name="Matic I."/>
            <person name="Nassif X."/>
            <person name="Oztas S."/>
            <person name="Petit M.A."/>
            <person name="Pichon C."/>
            <person name="Rouy Z."/>
            <person name="Ruf C.S."/>
            <person name="Schneider D."/>
            <person name="Tourret J."/>
            <person name="Vacherie B."/>
            <person name="Vallenet D."/>
            <person name="Medigue C."/>
            <person name="Rocha E.P.C."/>
            <person name="Denamur E."/>
        </authorList>
    </citation>
    <scope>NUCLEOTIDE SEQUENCE [LARGE SCALE GENOMIC DNA]</scope>
    <source>
        <strain>ED1a</strain>
    </source>
</reference>
<feature type="chain" id="PRO_1000184848" description="Agmatinase">
    <location>
        <begin position="1"/>
        <end position="306"/>
    </location>
</feature>
<feature type="binding site" evidence="1">
    <location>
        <position position="126"/>
    </location>
    <ligand>
        <name>Mn(2+)</name>
        <dbReference type="ChEBI" id="CHEBI:29035"/>
    </ligand>
</feature>
<feature type="binding site" evidence="1">
    <location>
        <position position="149"/>
    </location>
    <ligand>
        <name>Mn(2+)</name>
        <dbReference type="ChEBI" id="CHEBI:29035"/>
    </ligand>
</feature>
<feature type="binding site" evidence="1">
    <location>
        <position position="151"/>
    </location>
    <ligand>
        <name>Mn(2+)</name>
        <dbReference type="ChEBI" id="CHEBI:29035"/>
    </ligand>
</feature>
<feature type="binding site" evidence="1">
    <location>
        <position position="153"/>
    </location>
    <ligand>
        <name>Mn(2+)</name>
        <dbReference type="ChEBI" id="CHEBI:29035"/>
    </ligand>
</feature>
<feature type="binding site" evidence="1">
    <location>
        <position position="230"/>
    </location>
    <ligand>
        <name>Mn(2+)</name>
        <dbReference type="ChEBI" id="CHEBI:29035"/>
    </ligand>
</feature>
<feature type="binding site" evidence="1">
    <location>
        <position position="232"/>
    </location>
    <ligand>
        <name>Mn(2+)</name>
        <dbReference type="ChEBI" id="CHEBI:29035"/>
    </ligand>
</feature>
<gene>
    <name evidence="1" type="primary">speB</name>
    <name type="ordered locus">ECED1_3399</name>
</gene>
<dbReference type="EC" id="3.5.3.11" evidence="1"/>
<dbReference type="EMBL" id="CU928162">
    <property type="protein sequence ID" value="CAR09553.2"/>
    <property type="molecule type" value="Genomic_DNA"/>
</dbReference>
<dbReference type="RefSeq" id="WP_000105562.1">
    <property type="nucleotide sequence ID" value="NC_011745.1"/>
</dbReference>
<dbReference type="SMR" id="B7MZN5"/>
<dbReference type="KEGG" id="ecq:ECED1_3399"/>
<dbReference type="HOGENOM" id="CLU_039478_0_0_6"/>
<dbReference type="UniPathway" id="UPA00534">
    <property type="reaction ID" value="UER00287"/>
</dbReference>
<dbReference type="Proteomes" id="UP000000748">
    <property type="component" value="Chromosome"/>
</dbReference>
<dbReference type="GO" id="GO:0008783">
    <property type="term" value="F:agmatinase activity"/>
    <property type="evidence" value="ECO:0007669"/>
    <property type="project" value="UniProtKB-UniRule"/>
</dbReference>
<dbReference type="GO" id="GO:0030145">
    <property type="term" value="F:manganese ion binding"/>
    <property type="evidence" value="ECO:0007669"/>
    <property type="project" value="InterPro"/>
</dbReference>
<dbReference type="GO" id="GO:0033389">
    <property type="term" value="P:putrescine biosynthetic process from arginine, via agmatine"/>
    <property type="evidence" value="ECO:0007669"/>
    <property type="project" value="TreeGrafter"/>
</dbReference>
<dbReference type="GO" id="GO:0008295">
    <property type="term" value="P:spermidine biosynthetic process"/>
    <property type="evidence" value="ECO:0007669"/>
    <property type="project" value="UniProtKB-UniRule"/>
</dbReference>
<dbReference type="CDD" id="cd11592">
    <property type="entry name" value="Agmatinase_PAH"/>
    <property type="match status" value="1"/>
</dbReference>
<dbReference type="FunFam" id="3.40.800.10:FF:000001">
    <property type="entry name" value="Agmatinase"/>
    <property type="match status" value="1"/>
</dbReference>
<dbReference type="Gene3D" id="3.40.800.10">
    <property type="entry name" value="Ureohydrolase domain"/>
    <property type="match status" value="1"/>
</dbReference>
<dbReference type="HAMAP" id="MF_01418">
    <property type="entry name" value="SpeB"/>
    <property type="match status" value="1"/>
</dbReference>
<dbReference type="InterPro" id="IPR023694">
    <property type="entry name" value="Agmatinase"/>
</dbReference>
<dbReference type="InterPro" id="IPR005925">
    <property type="entry name" value="Agmatinase-rel"/>
</dbReference>
<dbReference type="InterPro" id="IPR006035">
    <property type="entry name" value="Ureohydrolase"/>
</dbReference>
<dbReference type="InterPro" id="IPR023696">
    <property type="entry name" value="Ureohydrolase_dom_sf"/>
</dbReference>
<dbReference type="InterPro" id="IPR020855">
    <property type="entry name" value="Ureohydrolase_Mn_BS"/>
</dbReference>
<dbReference type="NCBIfam" id="TIGR01230">
    <property type="entry name" value="agmatinase"/>
    <property type="match status" value="1"/>
</dbReference>
<dbReference type="NCBIfam" id="NF002564">
    <property type="entry name" value="PRK02190.1"/>
    <property type="match status" value="1"/>
</dbReference>
<dbReference type="PANTHER" id="PTHR11358">
    <property type="entry name" value="ARGINASE/AGMATINASE"/>
    <property type="match status" value="1"/>
</dbReference>
<dbReference type="PANTHER" id="PTHR11358:SF26">
    <property type="entry name" value="GUANIDINO ACID HYDROLASE, MITOCHONDRIAL"/>
    <property type="match status" value="1"/>
</dbReference>
<dbReference type="Pfam" id="PF00491">
    <property type="entry name" value="Arginase"/>
    <property type="match status" value="1"/>
</dbReference>
<dbReference type="PIRSF" id="PIRSF036979">
    <property type="entry name" value="Arginase"/>
    <property type="match status" value="1"/>
</dbReference>
<dbReference type="SUPFAM" id="SSF52768">
    <property type="entry name" value="Arginase/deacetylase"/>
    <property type="match status" value="1"/>
</dbReference>
<dbReference type="PROSITE" id="PS01053">
    <property type="entry name" value="ARGINASE_1"/>
    <property type="match status" value="1"/>
</dbReference>
<dbReference type="PROSITE" id="PS51409">
    <property type="entry name" value="ARGINASE_2"/>
    <property type="match status" value="1"/>
</dbReference>
<accession>B7MZN5</accession>
<keyword id="KW-0378">Hydrolase</keyword>
<keyword id="KW-0464">Manganese</keyword>
<keyword id="KW-0479">Metal-binding</keyword>
<keyword id="KW-0620">Polyamine biosynthesis</keyword>
<keyword id="KW-0661">Putrescine biosynthesis</keyword>
<keyword id="KW-0745">Spermidine biosynthesis</keyword>
<sequence length="306" mass="33571">MSTLGHQYDNSLVSNAFGFLRLPMNFQPYDSDADWVITGVPFDMATSGRAGGRHGPAAIRQVSTNLAWEHNRFPWNFDMRERLNVVDCGDLVYAFGDAREMSEKLQAHAEKLLAAGKRMLSFGGDHFVTLPLLRAHAKHFGKMALVHFDAHTDTYANGCEFDHGTMFYTAPKEGLIDPNHSVQIGIRTEFDKDNGFTVLDACQVNDRSVDDIIAQVKQIVGDMPVYLTFDIDCLDPAFAPGTGTPVIGGLTSDRAIKLVRGLKDLNIVGMDVVEVAPAYDQSEITALAAATLALEMLYIQAAKKGE</sequence>
<proteinExistence type="inferred from homology"/>
<name>SPEB_ECO81</name>
<protein>
    <recommendedName>
        <fullName evidence="1">Agmatinase</fullName>
        <ecNumber evidence="1">3.5.3.11</ecNumber>
    </recommendedName>
    <alternativeName>
        <fullName evidence="1">Agmatine ureohydrolase</fullName>
        <shortName evidence="1">AUH</shortName>
    </alternativeName>
</protein>
<evidence type="ECO:0000255" key="1">
    <source>
        <dbReference type="HAMAP-Rule" id="MF_01418"/>
    </source>
</evidence>
<comment type="function">
    <text evidence="1">Catalyzes the formation of putrescine from agmatine.</text>
</comment>
<comment type="catalytic activity">
    <reaction evidence="1">
        <text>agmatine + H2O = urea + putrescine</text>
        <dbReference type="Rhea" id="RHEA:13929"/>
        <dbReference type="ChEBI" id="CHEBI:15377"/>
        <dbReference type="ChEBI" id="CHEBI:16199"/>
        <dbReference type="ChEBI" id="CHEBI:58145"/>
        <dbReference type="ChEBI" id="CHEBI:326268"/>
        <dbReference type="EC" id="3.5.3.11"/>
    </reaction>
</comment>
<comment type="cofactor">
    <cofactor evidence="1">
        <name>Mn(2+)</name>
        <dbReference type="ChEBI" id="CHEBI:29035"/>
    </cofactor>
</comment>
<comment type="pathway">
    <text evidence="1">Amine and polyamine biosynthesis; putrescine biosynthesis via agmatine pathway; putrescine from agmatine: step 1/1.</text>
</comment>
<comment type="similarity">
    <text evidence="1">Belongs to the arginase family. Agmatinase subfamily.</text>
</comment>
<organism>
    <name type="scientific">Escherichia coli O81 (strain ED1a)</name>
    <dbReference type="NCBI Taxonomy" id="585397"/>
    <lineage>
        <taxon>Bacteria</taxon>
        <taxon>Pseudomonadati</taxon>
        <taxon>Pseudomonadota</taxon>
        <taxon>Gammaproteobacteria</taxon>
        <taxon>Enterobacterales</taxon>
        <taxon>Enterobacteriaceae</taxon>
        <taxon>Escherichia</taxon>
    </lineage>
</organism>